<evidence type="ECO:0000250" key="1"/>
<evidence type="ECO:0000255" key="2"/>
<evidence type="ECO:0000255" key="3">
    <source>
        <dbReference type="PROSITE-ProRule" id="PRU01230"/>
    </source>
</evidence>
<evidence type="ECO:0000305" key="4"/>
<name>GPA6_CAEBR</name>
<feature type="initiator methionine" description="Removed" evidence="2">
    <location>
        <position position="1"/>
    </location>
</feature>
<feature type="chain" id="PRO_0000203638" description="Guanine nucleotide-binding protein alpha-6 subunit">
    <location>
        <begin position="2"/>
        <end position="365"/>
    </location>
</feature>
<feature type="domain" description="G-alpha" evidence="3">
    <location>
        <begin position="42"/>
        <end position="364"/>
    </location>
</feature>
<feature type="region of interest" description="G1 motif" evidence="3">
    <location>
        <begin position="45"/>
        <end position="58"/>
    </location>
</feature>
<feature type="region of interest" description="G2 motif" evidence="3">
    <location>
        <begin position="185"/>
        <end position="193"/>
    </location>
</feature>
<feature type="region of interest" description="G3 motif" evidence="3">
    <location>
        <begin position="208"/>
        <end position="217"/>
    </location>
</feature>
<feature type="region of interest" description="G4 motif" evidence="3">
    <location>
        <begin position="277"/>
        <end position="284"/>
    </location>
</feature>
<feature type="region of interest" description="G5 motif" evidence="3">
    <location>
        <begin position="334"/>
        <end position="339"/>
    </location>
</feature>
<feature type="binding site" evidence="1">
    <location>
        <begin position="50"/>
        <end position="57"/>
    </location>
    <ligand>
        <name>GTP</name>
        <dbReference type="ChEBI" id="CHEBI:37565"/>
    </ligand>
</feature>
<feature type="binding site" evidence="1">
    <location>
        <position position="57"/>
    </location>
    <ligand>
        <name>Mg(2+)</name>
        <dbReference type="ChEBI" id="CHEBI:18420"/>
    </ligand>
</feature>
<feature type="binding site" evidence="1">
    <location>
        <begin position="187"/>
        <end position="193"/>
    </location>
    <ligand>
        <name>GTP</name>
        <dbReference type="ChEBI" id="CHEBI:37565"/>
    </ligand>
</feature>
<feature type="binding site" evidence="1">
    <location>
        <position position="193"/>
    </location>
    <ligand>
        <name>Mg(2+)</name>
        <dbReference type="ChEBI" id="CHEBI:18420"/>
    </ligand>
</feature>
<feature type="binding site" evidence="1">
    <location>
        <begin position="212"/>
        <end position="216"/>
    </location>
    <ligand>
        <name>GTP</name>
        <dbReference type="ChEBI" id="CHEBI:37565"/>
    </ligand>
</feature>
<feature type="binding site" evidence="1">
    <location>
        <begin position="281"/>
        <end position="284"/>
    </location>
    <ligand>
        <name>GTP</name>
        <dbReference type="ChEBI" id="CHEBI:37565"/>
    </ligand>
</feature>
<feature type="binding site" evidence="1">
    <location>
        <position position="336"/>
    </location>
    <ligand>
        <name>GTP</name>
        <dbReference type="ChEBI" id="CHEBI:37565"/>
    </ligand>
</feature>
<feature type="lipid moiety-binding region" description="N-myristoyl glycine" evidence="2">
    <location>
        <position position="2"/>
    </location>
</feature>
<feature type="sequence conflict" description="In Ref. 1; AAW02905." evidence="4" ref="1">
    <original>K</original>
    <variation>KY</variation>
    <location>
        <position position="166"/>
    </location>
</feature>
<reference key="1">
    <citation type="journal article" date="2005" name="Mol. Genet. Genomics">
        <title>Functional constraint and divergence in the G protein family in Caenorhabditis elegans and Caenorhabditis briggsae.</title>
        <authorList>
            <person name="Jovelin R."/>
            <person name="Phillips P.C."/>
        </authorList>
    </citation>
    <scope>NUCLEOTIDE SEQUENCE [GENOMIC DNA]</scope>
    <source>
        <strain>AF16</strain>
    </source>
</reference>
<reference key="2">
    <citation type="journal article" date="2003" name="PLoS Biol.">
        <title>The genome sequence of Caenorhabditis briggsae: a platform for comparative genomics.</title>
        <authorList>
            <person name="Stein L.D."/>
            <person name="Bao Z."/>
            <person name="Blasiar D."/>
            <person name="Blumenthal T."/>
            <person name="Brent M.R."/>
            <person name="Chen N."/>
            <person name="Chinwalla A."/>
            <person name="Clarke L."/>
            <person name="Clee C."/>
            <person name="Coghlan A."/>
            <person name="Coulson A."/>
            <person name="D'Eustachio P."/>
            <person name="Fitch D.H.A."/>
            <person name="Fulton L.A."/>
            <person name="Fulton R.E."/>
            <person name="Griffiths-Jones S."/>
            <person name="Harris T.W."/>
            <person name="Hillier L.W."/>
            <person name="Kamath R."/>
            <person name="Kuwabara P.E."/>
            <person name="Mardis E.R."/>
            <person name="Marra M.A."/>
            <person name="Miner T.L."/>
            <person name="Minx P."/>
            <person name="Mullikin J.C."/>
            <person name="Plumb R.W."/>
            <person name="Rogers J."/>
            <person name="Schein J.E."/>
            <person name="Sohrmann M."/>
            <person name="Spieth J."/>
            <person name="Stajich J.E."/>
            <person name="Wei C."/>
            <person name="Willey D."/>
            <person name="Wilson R.K."/>
            <person name="Durbin R.M."/>
            <person name="Waterston R.H."/>
        </authorList>
    </citation>
    <scope>NUCLEOTIDE SEQUENCE [LARGE SCALE GENOMIC DNA]</scope>
    <source>
        <strain>AF16</strain>
    </source>
</reference>
<gene>
    <name type="primary">gpa-6</name>
    <name type="ORF">CBG05252</name>
</gene>
<keyword id="KW-0342">GTP-binding</keyword>
<keyword id="KW-0449">Lipoprotein</keyword>
<keyword id="KW-0460">Magnesium</keyword>
<keyword id="KW-0479">Metal-binding</keyword>
<keyword id="KW-0519">Myristate</keyword>
<keyword id="KW-0547">Nucleotide-binding</keyword>
<keyword id="KW-1185">Reference proteome</keyword>
<keyword id="KW-0807">Transducer</keyword>
<protein>
    <recommendedName>
        <fullName>Guanine nucleotide-binding protein alpha-6 subunit</fullName>
    </recommendedName>
</protein>
<sequence>MGAGAGGLSLRGARLSPEERANSSKSRAIDRALSKDHTDDLNRFKILLLGTAESGKSTIFRQMRVLHLDGYAKEDALEYLSIIHSNCMEALTQLVEACSAFGILHDITVQEDVDRFEGFKKKLRDPEGLVIPVVIGRCMDRVWQSSSMQMCYETRRFRFALLDSAKFMDNIVRLTEDNYVPTIQDIVHCRISTTGINEIAFNHKKMDFKMVDVGGQRSERRKWIHCFDNVDMILFIVSMSDYDQLDPEDHKYNRMKQSYEIFKTIVHCDLFRHASIVLFLNKYDVFVEKLKTSPLRRSFKSYDGDNSEESARDFIKKLFRRCITDRHKFFVFETTATDTGNIDLVFGSAVAHIVNENLRSAGLHE</sequence>
<proteinExistence type="inferred from homology"/>
<dbReference type="EMBL" id="AY634299">
    <property type="protein sequence ID" value="AAW02905.1"/>
    <property type="molecule type" value="Genomic_DNA"/>
</dbReference>
<dbReference type="EMBL" id="HE601042">
    <property type="protein sequence ID" value="CAP25780.3"/>
    <property type="molecule type" value="Genomic_DNA"/>
</dbReference>
<dbReference type="SMR" id="Q4VT31"/>
<dbReference type="FunCoup" id="Q4VT31">
    <property type="interactions" value="3"/>
</dbReference>
<dbReference type="STRING" id="6238.Q4VT31"/>
<dbReference type="WormBase" id="CBG05252">
    <property type="protein sequence ID" value="CBP43656"/>
    <property type="gene ID" value="WBGene00027750"/>
    <property type="gene designation" value="Cbr-gpa-6"/>
</dbReference>
<dbReference type="eggNOG" id="KOG0082">
    <property type="taxonomic scope" value="Eukaryota"/>
</dbReference>
<dbReference type="HOGENOM" id="CLU_014184_6_0_1"/>
<dbReference type="InParanoid" id="Q4VT31"/>
<dbReference type="OMA" id="CETYRIV"/>
<dbReference type="Proteomes" id="UP000008549">
    <property type="component" value="Unassembled WGS sequence"/>
</dbReference>
<dbReference type="GO" id="GO:0005737">
    <property type="term" value="C:cytoplasm"/>
    <property type="evidence" value="ECO:0000318"/>
    <property type="project" value="GO_Central"/>
</dbReference>
<dbReference type="GO" id="GO:0005834">
    <property type="term" value="C:heterotrimeric G-protein complex"/>
    <property type="evidence" value="ECO:0000318"/>
    <property type="project" value="GO_Central"/>
</dbReference>
<dbReference type="GO" id="GO:0001664">
    <property type="term" value="F:G protein-coupled receptor binding"/>
    <property type="evidence" value="ECO:0000318"/>
    <property type="project" value="GO_Central"/>
</dbReference>
<dbReference type="GO" id="GO:0031683">
    <property type="term" value="F:G-protein beta/gamma-subunit complex binding"/>
    <property type="evidence" value="ECO:0000318"/>
    <property type="project" value="GO_Central"/>
</dbReference>
<dbReference type="GO" id="GO:0005525">
    <property type="term" value="F:GTP binding"/>
    <property type="evidence" value="ECO:0007669"/>
    <property type="project" value="UniProtKB-KW"/>
</dbReference>
<dbReference type="GO" id="GO:0003924">
    <property type="term" value="F:GTPase activity"/>
    <property type="evidence" value="ECO:0000318"/>
    <property type="project" value="GO_Central"/>
</dbReference>
<dbReference type="GO" id="GO:0046872">
    <property type="term" value="F:metal ion binding"/>
    <property type="evidence" value="ECO:0007669"/>
    <property type="project" value="UniProtKB-KW"/>
</dbReference>
<dbReference type="GO" id="GO:0007188">
    <property type="term" value="P:adenylate cyclase-modulating G protein-coupled receptor signaling pathway"/>
    <property type="evidence" value="ECO:0000318"/>
    <property type="project" value="GO_Central"/>
</dbReference>
<dbReference type="CDD" id="cd00066">
    <property type="entry name" value="G-alpha"/>
    <property type="match status" value="1"/>
</dbReference>
<dbReference type="FunFam" id="3.40.50.300:FF:000181">
    <property type="entry name" value="Guanine nucleotide-binding protein subunit alpha"/>
    <property type="match status" value="1"/>
</dbReference>
<dbReference type="Gene3D" id="1.10.400.10">
    <property type="entry name" value="GI Alpha 1, domain 2-like"/>
    <property type="match status" value="1"/>
</dbReference>
<dbReference type="Gene3D" id="3.40.50.300">
    <property type="entry name" value="P-loop containing nucleotide triphosphate hydrolases"/>
    <property type="match status" value="1"/>
</dbReference>
<dbReference type="InterPro" id="IPR001019">
    <property type="entry name" value="Gprotein_alpha_su"/>
</dbReference>
<dbReference type="InterPro" id="IPR011025">
    <property type="entry name" value="GproteinA_insert"/>
</dbReference>
<dbReference type="InterPro" id="IPR027417">
    <property type="entry name" value="P-loop_NTPase"/>
</dbReference>
<dbReference type="PANTHER" id="PTHR10218">
    <property type="entry name" value="GTP-BINDING PROTEIN ALPHA SUBUNIT"/>
    <property type="match status" value="1"/>
</dbReference>
<dbReference type="PANTHER" id="PTHR10218:SF247">
    <property type="entry name" value="GUANINE NUCLEOTIDE-BINDING PROTEIN ALPHA-6 SUBUNIT"/>
    <property type="match status" value="1"/>
</dbReference>
<dbReference type="Pfam" id="PF00503">
    <property type="entry name" value="G-alpha"/>
    <property type="match status" value="1"/>
</dbReference>
<dbReference type="PRINTS" id="PR00318">
    <property type="entry name" value="GPROTEINA"/>
</dbReference>
<dbReference type="SMART" id="SM00275">
    <property type="entry name" value="G_alpha"/>
    <property type="match status" value="1"/>
</dbReference>
<dbReference type="SUPFAM" id="SSF52540">
    <property type="entry name" value="P-loop containing nucleoside triphosphate hydrolases"/>
    <property type="match status" value="1"/>
</dbReference>
<dbReference type="SUPFAM" id="SSF47895">
    <property type="entry name" value="Transducin (alpha subunit), insertion domain"/>
    <property type="match status" value="1"/>
</dbReference>
<dbReference type="PROSITE" id="PS51882">
    <property type="entry name" value="G_ALPHA"/>
    <property type="match status" value="1"/>
</dbReference>
<accession>Q4VT31</accession>
<accession>A8WZH0</accession>
<accession>Q61UL5</accession>
<comment type="function">
    <text>Guanine nucleotide-binding proteins (G proteins) are involved as modulators or transducers in various transmembrane signaling systems.</text>
</comment>
<comment type="subunit">
    <text>G proteins are composed of 3 units; alpha, beta and gamma. The alpha chain contains the guanine nucleotide binding site.</text>
</comment>
<comment type="similarity">
    <text evidence="4">Belongs to the G-alpha family.</text>
</comment>
<organism>
    <name type="scientific">Caenorhabditis briggsae</name>
    <dbReference type="NCBI Taxonomy" id="6238"/>
    <lineage>
        <taxon>Eukaryota</taxon>
        <taxon>Metazoa</taxon>
        <taxon>Ecdysozoa</taxon>
        <taxon>Nematoda</taxon>
        <taxon>Chromadorea</taxon>
        <taxon>Rhabditida</taxon>
        <taxon>Rhabditina</taxon>
        <taxon>Rhabditomorpha</taxon>
        <taxon>Rhabditoidea</taxon>
        <taxon>Rhabditidae</taxon>
        <taxon>Peloderinae</taxon>
        <taxon>Caenorhabditis</taxon>
    </lineage>
</organism>